<dbReference type="EMBL" id="AP009044">
    <property type="protein sequence ID" value="BAF55431.1"/>
    <property type="molecule type" value="Genomic_DNA"/>
</dbReference>
<dbReference type="RefSeq" id="WP_011897801.1">
    <property type="nucleotide sequence ID" value="NC_009342.1"/>
</dbReference>
<dbReference type="SMR" id="A4QGR5"/>
<dbReference type="GeneID" id="1020464"/>
<dbReference type="KEGG" id="cgt:cgR_2423"/>
<dbReference type="HOGENOM" id="CLU_153743_0_0_11"/>
<dbReference type="PhylomeDB" id="A4QGR5"/>
<dbReference type="Proteomes" id="UP000006698">
    <property type="component" value="Chromosome"/>
</dbReference>
<dbReference type="GO" id="GO:0030163">
    <property type="term" value="P:protein catabolic process"/>
    <property type="evidence" value="ECO:0007669"/>
    <property type="project" value="InterPro"/>
</dbReference>
<dbReference type="GO" id="GO:0006508">
    <property type="term" value="P:proteolysis"/>
    <property type="evidence" value="ECO:0007669"/>
    <property type="project" value="UniProtKB-UniRule"/>
</dbReference>
<dbReference type="Gene3D" id="3.30.1390.10">
    <property type="match status" value="1"/>
</dbReference>
<dbReference type="HAMAP" id="MF_00302">
    <property type="entry name" value="ClpS"/>
    <property type="match status" value="1"/>
</dbReference>
<dbReference type="InterPro" id="IPR022935">
    <property type="entry name" value="ClpS"/>
</dbReference>
<dbReference type="InterPro" id="IPR003769">
    <property type="entry name" value="ClpS_core"/>
</dbReference>
<dbReference type="InterPro" id="IPR014719">
    <property type="entry name" value="Ribosomal_bL12_C/ClpS-like"/>
</dbReference>
<dbReference type="NCBIfam" id="NF000668">
    <property type="entry name" value="PRK00033.1-1"/>
    <property type="match status" value="1"/>
</dbReference>
<dbReference type="Pfam" id="PF02617">
    <property type="entry name" value="ClpS"/>
    <property type="match status" value="1"/>
</dbReference>
<dbReference type="SUPFAM" id="SSF54736">
    <property type="entry name" value="ClpS-like"/>
    <property type="match status" value="1"/>
</dbReference>
<gene>
    <name evidence="1" type="primary">clpS</name>
    <name type="ordered locus">cgR_2423</name>
</gene>
<evidence type="ECO:0000255" key="1">
    <source>
        <dbReference type="HAMAP-Rule" id="MF_00302"/>
    </source>
</evidence>
<sequence>MSSPSAPLATPDVELDVHTLSSENLPWLCIVWDDPVNLMSYVTYVFQTVLGFSKKRATELMMQVHTEGKAVVSSGEKDKVEGDVKKLHTAGLWATMQQAG</sequence>
<reference key="1">
    <citation type="journal article" date="2007" name="Microbiology">
        <title>Comparative analysis of the Corynebacterium glutamicum group and complete genome sequence of strain R.</title>
        <authorList>
            <person name="Yukawa H."/>
            <person name="Omumasaba C.A."/>
            <person name="Nonaka H."/>
            <person name="Kos P."/>
            <person name="Okai N."/>
            <person name="Suzuki N."/>
            <person name="Suda M."/>
            <person name="Tsuge Y."/>
            <person name="Watanabe J."/>
            <person name="Ikeda Y."/>
            <person name="Vertes A.A."/>
            <person name="Inui M."/>
        </authorList>
    </citation>
    <scope>NUCLEOTIDE SEQUENCE [LARGE SCALE GENOMIC DNA]</scope>
    <source>
        <strain>R</strain>
    </source>
</reference>
<protein>
    <recommendedName>
        <fullName evidence="1">ATP-dependent Clp protease adapter protein ClpS</fullName>
    </recommendedName>
</protein>
<organism>
    <name type="scientific">Corynebacterium glutamicum (strain R)</name>
    <dbReference type="NCBI Taxonomy" id="340322"/>
    <lineage>
        <taxon>Bacteria</taxon>
        <taxon>Bacillati</taxon>
        <taxon>Actinomycetota</taxon>
        <taxon>Actinomycetes</taxon>
        <taxon>Mycobacteriales</taxon>
        <taxon>Corynebacteriaceae</taxon>
        <taxon>Corynebacterium</taxon>
    </lineage>
</organism>
<feature type="chain" id="PRO_0000300701" description="ATP-dependent Clp protease adapter protein ClpS">
    <location>
        <begin position="1"/>
        <end position="100"/>
    </location>
</feature>
<accession>A4QGR5</accession>
<proteinExistence type="inferred from homology"/>
<name>CLPS_CORGB</name>
<comment type="function">
    <text evidence="1">Involved in the modulation of the specificity of the ClpAP-mediated ATP-dependent protein degradation.</text>
</comment>
<comment type="subunit">
    <text evidence="1">Binds to the N-terminal domain of the chaperone ClpA.</text>
</comment>
<comment type="similarity">
    <text evidence="1">Belongs to the ClpS family.</text>
</comment>